<dbReference type="EC" id="1.13.11.11" evidence="1"/>
<dbReference type="EMBL" id="CP001131">
    <property type="protein sequence ID" value="ACG74502.1"/>
    <property type="molecule type" value="Genomic_DNA"/>
</dbReference>
<dbReference type="RefSeq" id="WP_012527276.1">
    <property type="nucleotide sequence ID" value="NC_011145.1"/>
</dbReference>
<dbReference type="SMR" id="B4UMQ6"/>
<dbReference type="KEGG" id="ank:AnaeK_3282"/>
<dbReference type="HOGENOM" id="CLU_063240_0_0_7"/>
<dbReference type="OrthoDB" id="9776847at2"/>
<dbReference type="UniPathway" id="UPA00333">
    <property type="reaction ID" value="UER00453"/>
</dbReference>
<dbReference type="Proteomes" id="UP000001871">
    <property type="component" value="Chromosome"/>
</dbReference>
<dbReference type="GO" id="GO:0020037">
    <property type="term" value="F:heme binding"/>
    <property type="evidence" value="ECO:0000250"/>
    <property type="project" value="UniProtKB"/>
</dbReference>
<dbReference type="GO" id="GO:0046872">
    <property type="term" value="F:metal ion binding"/>
    <property type="evidence" value="ECO:0007669"/>
    <property type="project" value="UniProtKB-KW"/>
</dbReference>
<dbReference type="GO" id="GO:0004833">
    <property type="term" value="F:tryptophan 2,3-dioxygenase activity"/>
    <property type="evidence" value="ECO:0000250"/>
    <property type="project" value="UniProtKB"/>
</dbReference>
<dbReference type="GO" id="GO:0019442">
    <property type="term" value="P:L-tryptophan catabolic process to acetyl-CoA"/>
    <property type="evidence" value="ECO:0007669"/>
    <property type="project" value="TreeGrafter"/>
</dbReference>
<dbReference type="GO" id="GO:0019441">
    <property type="term" value="P:L-tryptophan catabolic process to kynurenine"/>
    <property type="evidence" value="ECO:0000250"/>
    <property type="project" value="UniProtKB"/>
</dbReference>
<dbReference type="FunFam" id="1.20.58.480:FF:000001">
    <property type="entry name" value="Tryptophan 2,3-dioxygenase"/>
    <property type="match status" value="1"/>
</dbReference>
<dbReference type="Gene3D" id="1.20.58.480">
    <property type="match status" value="1"/>
</dbReference>
<dbReference type="HAMAP" id="MF_01972">
    <property type="entry name" value="T23O"/>
    <property type="match status" value="1"/>
</dbReference>
<dbReference type="InterPro" id="IPR037217">
    <property type="entry name" value="Trp/Indoleamine_2_3_dOase-like"/>
</dbReference>
<dbReference type="InterPro" id="IPR004981">
    <property type="entry name" value="Trp_2_3_dOase"/>
</dbReference>
<dbReference type="PANTHER" id="PTHR10138">
    <property type="entry name" value="TRYPTOPHAN 2,3-DIOXYGENASE"/>
    <property type="match status" value="1"/>
</dbReference>
<dbReference type="PANTHER" id="PTHR10138:SF0">
    <property type="entry name" value="TRYPTOPHAN 2,3-DIOXYGENASE"/>
    <property type="match status" value="1"/>
</dbReference>
<dbReference type="Pfam" id="PF03301">
    <property type="entry name" value="Trp_dioxygenase"/>
    <property type="match status" value="2"/>
</dbReference>
<dbReference type="SUPFAM" id="SSF140959">
    <property type="entry name" value="Indolic compounds 2,3-dioxygenase-like"/>
    <property type="match status" value="1"/>
</dbReference>
<name>T23O_ANASK</name>
<comment type="function">
    <text evidence="1">Heme-dependent dioxygenase that catalyzes the oxidative cleavage of the L-tryptophan (L-Trp) pyrrole ring and converts L-tryptophan to N-formyl-L-kynurenine. Catalyzes the oxidative cleavage of the indole moiety.</text>
</comment>
<comment type="catalytic activity">
    <reaction evidence="1">
        <text>L-tryptophan + O2 = N-formyl-L-kynurenine</text>
        <dbReference type="Rhea" id="RHEA:24536"/>
        <dbReference type="ChEBI" id="CHEBI:15379"/>
        <dbReference type="ChEBI" id="CHEBI:57912"/>
        <dbReference type="ChEBI" id="CHEBI:58629"/>
        <dbReference type="EC" id="1.13.11.11"/>
    </reaction>
</comment>
<comment type="cofactor">
    <cofactor evidence="1">
        <name>heme</name>
        <dbReference type="ChEBI" id="CHEBI:30413"/>
    </cofactor>
    <text evidence="1">Binds 1 heme group per subunit.</text>
</comment>
<comment type="pathway">
    <text evidence="1">Amino-acid degradation; L-tryptophan degradation via kynurenine pathway; L-kynurenine from L-tryptophan: step 1/2.</text>
</comment>
<comment type="subunit">
    <text evidence="1">Homotetramer.</text>
</comment>
<comment type="similarity">
    <text evidence="1">Belongs to the tryptophan 2,3-dioxygenase family.</text>
</comment>
<gene>
    <name evidence="1" type="primary">kynA</name>
    <name type="ordered locus">AnaeK_3282</name>
</gene>
<sequence>MTDPSAHSAALTYGSYLALDELLSAQRPRSEEHDELLFIVVHQVYELWFKQVVHELAYLQERLHRGEGGHALATLKRVLTILKTVVSQVDVIETMTPRQFTAFRSRLEAASGFQSAQFRVLEAMLGRRDERMLAPYPPGGPGHARIAAAMAAPSLFDSLLRYLATQGFAVPPVPEAPAAGWRPPSEAVQRVLLDVYRADGEAALVCERFVDLDEGVQEWRYRHVKMVERTIGDKPGTGGSAGAQYLRTTLFTPAFPDLWAVRGAL</sequence>
<proteinExistence type="inferred from homology"/>
<organism>
    <name type="scientific">Anaeromyxobacter sp. (strain K)</name>
    <dbReference type="NCBI Taxonomy" id="447217"/>
    <lineage>
        <taxon>Bacteria</taxon>
        <taxon>Pseudomonadati</taxon>
        <taxon>Myxococcota</taxon>
        <taxon>Myxococcia</taxon>
        <taxon>Myxococcales</taxon>
        <taxon>Cystobacterineae</taxon>
        <taxon>Anaeromyxobacteraceae</taxon>
        <taxon>Anaeromyxobacter</taxon>
    </lineage>
</organism>
<evidence type="ECO:0000255" key="1">
    <source>
        <dbReference type="HAMAP-Rule" id="MF_01972"/>
    </source>
</evidence>
<accession>B4UMQ6</accession>
<feature type="chain" id="PRO_0000360081" description="Tryptophan 2,3-dioxygenase">
    <location>
        <begin position="1"/>
        <end position="265"/>
    </location>
</feature>
<feature type="binding site" evidence="1">
    <location>
        <begin position="38"/>
        <end position="42"/>
    </location>
    <ligand>
        <name>substrate</name>
    </ligand>
</feature>
<feature type="binding site" evidence="1">
    <location>
        <position position="104"/>
    </location>
    <ligand>
        <name>substrate</name>
    </ligand>
</feature>
<feature type="binding site" description="axial binding residue" evidence="1">
    <location>
        <position position="223"/>
    </location>
    <ligand>
        <name>heme</name>
        <dbReference type="ChEBI" id="CHEBI:30413"/>
    </ligand>
    <ligandPart>
        <name>Fe</name>
        <dbReference type="ChEBI" id="CHEBI:18248"/>
    </ligandPart>
</feature>
<feature type="binding site" evidence="1">
    <location>
        <position position="237"/>
    </location>
    <ligand>
        <name>substrate</name>
    </ligand>
</feature>
<protein>
    <recommendedName>
        <fullName evidence="1">Tryptophan 2,3-dioxygenase</fullName>
        <shortName evidence="1">TDO</shortName>
        <ecNumber evidence="1">1.13.11.11</ecNumber>
    </recommendedName>
    <alternativeName>
        <fullName evidence="1">Tryptamin 2,3-dioxygenase</fullName>
    </alternativeName>
    <alternativeName>
        <fullName evidence="1">Tryptophan oxygenase</fullName>
        <shortName evidence="1">TO</shortName>
        <shortName evidence="1">TRPO</shortName>
    </alternativeName>
    <alternativeName>
        <fullName evidence="1">Tryptophan pyrrolase</fullName>
    </alternativeName>
    <alternativeName>
        <fullName evidence="1">Tryptophanase</fullName>
    </alternativeName>
</protein>
<reference key="1">
    <citation type="submission" date="2008-08" db="EMBL/GenBank/DDBJ databases">
        <title>Complete sequence of Anaeromyxobacter sp. K.</title>
        <authorList>
            <consortium name="US DOE Joint Genome Institute"/>
            <person name="Lucas S."/>
            <person name="Copeland A."/>
            <person name="Lapidus A."/>
            <person name="Glavina del Rio T."/>
            <person name="Dalin E."/>
            <person name="Tice H."/>
            <person name="Bruce D."/>
            <person name="Goodwin L."/>
            <person name="Pitluck S."/>
            <person name="Saunders E."/>
            <person name="Brettin T."/>
            <person name="Detter J.C."/>
            <person name="Han C."/>
            <person name="Larimer F."/>
            <person name="Land M."/>
            <person name="Hauser L."/>
            <person name="Kyrpides N."/>
            <person name="Ovchinnikiva G."/>
            <person name="Beliaev A."/>
        </authorList>
    </citation>
    <scope>NUCLEOTIDE SEQUENCE [LARGE SCALE GENOMIC DNA]</scope>
    <source>
        <strain>K</strain>
    </source>
</reference>
<keyword id="KW-0223">Dioxygenase</keyword>
<keyword id="KW-0349">Heme</keyword>
<keyword id="KW-0408">Iron</keyword>
<keyword id="KW-0479">Metal-binding</keyword>
<keyword id="KW-0560">Oxidoreductase</keyword>
<keyword id="KW-0823">Tryptophan catabolism</keyword>